<gene>
    <name evidence="1" type="primary">rpmE</name>
    <name type="ordered locus">Acid_1023</name>
</gene>
<keyword id="KW-0479">Metal-binding</keyword>
<keyword id="KW-0687">Ribonucleoprotein</keyword>
<keyword id="KW-0689">Ribosomal protein</keyword>
<keyword id="KW-0694">RNA-binding</keyword>
<keyword id="KW-0699">rRNA-binding</keyword>
<keyword id="KW-0862">Zinc</keyword>
<organism>
    <name type="scientific">Solibacter usitatus (strain Ellin6076)</name>
    <dbReference type="NCBI Taxonomy" id="234267"/>
    <lineage>
        <taxon>Bacteria</taxon>
        <taxon>Pseudomonadati</taxon>
        <taxon>Acidobacteriota</taxon>
        <taxon>Terriglobia</taxon>
        <taxon>Bryobacterales</taxon>
        <taxon>Solibacteraceae</taxon>
        <taxon>Candidatus Solibacter</taxon>
    </lineage>
</organism>
<accession>Q02DD2</accession>
<dbReference type="EMBL" id="CP000473">
    <property type="protein sequence ID" value="ABJ82021.1"/>
    <property type="molecule type" value="Genomic_DNA"/>
</dbReference>
<dbReference type="SMR" id="Q02DD2"/>
<dbReference type="FunCoup" id="Q02DD2">
    <property type="interactions" value="478"/>
</dbReference>
<dbReference type="STRING" id="234267.Acid_1023"/>
<dbReference type="KEGG" id="sus:Acid_1023"/>
<dbReference type="eggNOG" id="COG0254">
    <property type="taxonomic scope" value="Bacteria"/>
</dbReference>
<dbReference type="HOGENOM" id="CLU_114306_4_0_0"/>
<dbReference type="InParanoid" id="Q02DD2"/>
<dbReference type="OrthoDB" id="9803251at2"/>
<dbReference type="GO" id="GO:1990904">
    <property type="term" value="C:ribonucleoprotein complex"/>
    <property type="evidence" value="ECO:0007669"/>
    <property type="project" value="UniProtKB-KW"/>
</dbReference>
<dbReference type="GO" id="GO:0005840">
    <property type="term" value="C:ribosome"/>
    <property type="evidence" value="ECO:0007669"/>
    <property type="project" value="UniProtKB-KW"/>
</dbReference>
<dbReference type="GO" id="GO:0046872">
    <property type="term" value="F:metal ion binding"/>
    <property type="evidence" value="ECO:0007669"/>
    <property type="project" value="UniProtKB-KW"/>
</dbReference>
<dbReference type="GO" id="GO:0019843">
    <property type="term" value="F:rRNA binding"/>
    <property type="evidence" value="ECO:0007669"/>
    <property type="project" value="UniProtKB-KW"/>
</dbReference>
<dbReference type="GO" id="GO:0003735">
    <property type="term" value="F:structural constituent of ribosome"/>
    <property type="evidence" value="ECO:0007669"/>
    <property type="project" value="InterPro"/>
</dbReference>
<dbReference type="GO" id="GO:0006412">
    <property type="term" value="P:translation"/>
    <property type="evidence" value="ECO:0007669"/>
    <property type="project" value="UniProtKB-UniRule"/>
</dbReference>
<dbReference type="Gene3D" id="4.10.830.30">
    <property type="entry name" value="Ribosomal protein L31"/>
    <property type="match status" value="1"/>
</dbReference>
<dbReference type="HAMAP" id="MF_00501">
    <property type="entry name" value="Ribosomal_bL31_1"/>
    <property type="match status" value="1"/>
</dbReference>
<dbReference type="InterPro" id="IPR034704">
    <property type="entry name" value="Ribosomal_bL28/bL31-like_sf"/>
</dbReference>
<dbReference type="InterPro" id="IPR002150">
    <property type="entry name" value="Ribosomal_bL31"/>
</dbReference>
<dbReference type="InterPro" id="IPR027491">
    <property type="entry name" value="Ribosomal_bL31_A"/>
</dbReference>
<dbReference type="InterPro" id="IPR042105">
    <property type="entry name" value="Ribosomal_bL31_sf"/>
</dbReference>
<dbReference type="NCBIfam" id="TIGR00105">
    <property type="entry name" value="L31"/>
    <property type="match status" value="1"/>
</dbReference>
<dbReference type="NCBIfam" id="NF000612">
    <property type="entry name" value="PRK00019.1"/>
    <property type="match status" value="1"/>
</dbReference>
<dbReference type="NCBIfam" id="NF001809">
    <property type="entry name" value="PRK00528.1"/>
    <property type="match status" value="1"/>
</dbReference>
<dbReference type="PANTHER" id="PTHR33280">
    <property type="entry name" value="50S RIBOSOMAL PROTEIN L31, CHLOROPLASTIC"/>
    <property type="match status" value="1"/>
</dbReference>
<dbReference type="PANTHER" id="PTHR33280:SF6">
    <property type="entry name" value="LARGE RIBOSOMAL SUBUNIT PROTEIN BL31A"/>
    <property type="match status" value="1"/>
</dbReference>
<dbReference type="Pfam" id="PF01197">
    <property type="entry name" value="Ribosomal_L31"/>
    <property type="match status" value="1"/>
</dbReference>
<dbReference type="PRINTS" id="PR01249">
    <property type="entry name" value="RIBOSOMALL31"/>
</dbReference>
<dbReference type="SUPFAM" id="SSF143800">
    <property type="entry name" value="L28p-like"/>
    <property type="match status" value="1"/>
</dbReference>
<dbReference type="PROSITE" id="PS01143">
    <property type="entry name" value="RIBOSOMAL_L31"/>
    <property type="match status" value="1"/>
</dbReference>
<name>RL31_SOLUE</name>
<protein>
    <recommendedName>
        <fullName evidence="1">Large ribosomal subunit protein bL31</fullName>
    </recommendedName>
    <alternativeName>
        <fullName evidence="2">50S ribosomal protein L31</fullName>
    </alternativeName>
</protein>
<proteinExistence type="inferred from homology"/>
<comment type="function">
    <text evidence="1">Binds the 23S rRNA.</text>
</comment>
<comment type="cofactor">
    <cofactor evidence="1">
        <name>Zn(2+)</name>
        <dbReference type="ChEBI" id="CHEBI:29105"/>
    </cofactor>
    <text evidence="1">Binds 1 zinc ion per subunit.</text>
</comment>
<comment type="subunit">
    <text evidence="1">Part of the 50S ribosomal subunit.</text>
</comment>
<comment type="similarity">
    <text evidence="1">Belongs to the bacterial ribosomal protein bL31 family. Type A subfamily.</text>
</comment>
<reference key="1">
    <citation type="journal article" date="2009" name="Appl. Environ. Microbiol.">
        <title>Three genomes from the phylum Acidobacteria provide insight into the lifestyles of these microorganisms in soils.</title>
        <authorList>
            <person name="Ward N.L."/>
            <person name="Challacombe J.F."/>
            <person name="Janssen P.H."/>
            <person name="Henrissat B."/>
            <person name="Coutinho P.M."/>
            <person name="Wu M."/>
            <person name="Xie G."/>
            <person name="Haft D.H."/>
            <person name="Sait M."/>
            <person name="Badger J."/>
            <person name="Barabote R.D."/>
            <person name="Bradley B."/>
            <person name="Brettin T.S."/>
            <person name="Brinkac L.M."/>
            <person name="Bruce D."/>
            <person name="Creasy T."/>
            <person name="Daugherty S.C."/>
            <person name="Davidsen T.M."/>
            <person name="DeBoy R.T."/>
            <person name="Detter J.C."/>
            <person name="Dodson R.J."/>
            <person name="Durkin A.S."/>
            <person name="Ganapathy A."/>
            <person name="Gwinn-Giglio M."/>
            <person name="Han C.S."/>
            <person name="Khouri H."/>
            <person name="Kiss H."/>
            <person name="Kothari S.P."/>
            <person name="Madupu R."/>
            <person name="Nelson K.E."/>
            <person name="Nelson W.C."/>
            <person name="Paulsen I."/>
            <person name="Penn K."/>
            <person name="Ren Q."/>
            <person name="Rosovitz M.J."/>
            <person name="Selengut J.D."/>
            <person name="Shrivastava S."/>
            <person name="Sullivan S.A."/>
            <person name="Tapia R."/>
            <person name="Thompson L.S."/>
            <person name="Watkins K.L."/>
            <person name="Yang Q."/>
            <person name="Yu C."/>
            <person name="Zafar N."/>
            <person name="Zhou L."/>
            <person name="Kuske C.R."/>
        </authorList>
    </citation>
    <scope>NUCLEOTIDE SEQUENCE [LARGE SCALE GENOMIC DNA]</scope>
    <source>
        <strain>Ellin6076</strain>
    </source>
</reference>
<evidence type="ECO:0000255" key="1">
    <source>
        <dbReference type="HAMAP-Rule" id="MF_00501"/>
    </source>
</evidence>
<evidence type="ECO:0000305" key="2"/>
<sequence length="76" mass="8400">MKAGIHPAYNEISVICACGHSLKTRSTHKGDMRVEICSSCHPFFTGKQKLMDTAGRIDRFEKKYKASRVGKAAPTT</sequence>
<feature type="chain" id="PRO_1000126742" description="Large ribosomal subunit protein bL31">
    <location>
        <begin position="1"/>
        <end position="76"/>
    </location>
</feature>
<feature type="binding site" evidence="1">
    <location>
        <position position="16"/>
    </location>
    <ligand>
        <name>Zn(2+)</name>
        <dbReference type="ChEBI" id="CHEBI:29105"/>
    </ligand>
</feature>
<feature type="binding site" evidence="1">
    <location>
        <position position="18"/>
    </location>
    <ligand>
        <name>Zn(2+)</name>
        <dbReference type="ChEBI" id="CHEBI:29105"/>
    </ligand>
</feature>
<feature type="binding site" evidence="1">
    <location>
        <position position="37"/>
    </location>
    <ligand>
        <name>Zn(2+)</name>
        <dbReference type="ChEBI" id="CHEBI:29105"/>
    </ligand>
</feature>
<feature type="binding site" evidence="1">
    <location>
        <position position="40"/>
    </location>
    <ligand>
        <name>Zn(2+)</name>
        <dbReference type="ChEBI" id="CHEBI:29105"/>
    </ligand>
</feature>